<gene>
    <name evidence="2" type="primary">INSIG1</name>
</gene>
<dbReference type="EMBL" id="BC126610">
    <property type="protein sequence ID" value="AAI26611.1"/>
    <property type="molecule type" value="mRNA"/>
</dbReference>
<dbReference type="RefSeq" id="NP_001071377.1">
    <property type="nucleotide sequence ID" value="NM_001077909.1"/>
</dbReference>
<dbReference type="SMR" id="A0JNC3"/>
<dbReference type="FunCoup" id="A0JNC3">
    <property type="interactions" value="28"/>
</dbReference>
<dbReference type="STRING" id="9913.ENSBTAP00000065040"/>
<dbReference type="PaxDb" id="9913-ENSBTAP00000002084"/>
<dbReference type="GeneID" id="511899"/>
<dbReference type="KEGG" id="bta:511899"/>
<dbReference type="CTD" id="3638"/>
<dbReference type="VEuPathDB" id="HostDB:ENSBTAG00000001592"/>
<dbReference type="eggNOG" id="KOG4363">
    <property type="taxonomic scope" value="Eukaryota"/>
</dbReference>
<dbReference type="HOGENOM" id="CLU_092922_0_0_1"/>
<dbReference type="InParanoid" id="A0JNC3"/>
<dbReference type="OMA" id="ENHTWSC"/>
<dbReference type="OrthoDB" id="205546at2759"/>
<dbReference type="TreeFam" id="TF331013"/>
<dbReference type="Proteomes" id="UP000009136">
    <property type="component" value="Chromosome 4"/>
</dbReference>
<dbReference type="Bgee" id="ENSBTAG00000001592">
    <property type="expression patterns" value="Expressed in diaphragm and 105 other cell types or tissues"/>
</dbReference>
<dbReference type="GO" id="GO:0005783">
    <property type="term" value="C:endoplasmic reticulum"/>
    <property type="evidence" value="ECO:0000318"/>
    <property type="project" value="GO_Central"/>
</dbReference>
<dbReference type="GO" id="GO:0032937">
    <property type="term" value="C:SREBP-SCAP-Insig complex"/>
    <property type="evidence" value="ECO:0000318"/>
    <property type="project" value="GO_Central"/>
</dbReference>
<dbReference type="GO" id="GO:0008142">
    <property type="term" value="F:oxysterol binding"/>
    <property type="evidence" value="ECO:0000250"/>
    <property type="project" value="UniProtKB"/>
</dbReference>
<dbReference type="GO" id="GO:0032869">
    <property type="term" value="P:cellular response to insulin stimulus"/>
    <property type="evidence" value="ECO:0000318"/>
    <property type="project" value="GO_Central"/>
</dbReference>
<dbReference type="GO" id="GO:0006695">
    <property type="term" value="P:cholesterol biosynthetic process"/>
    <property type="evidence" value="ECO:0000318"/>
    <property type="project" value="GO_Central"/>
</dbReference>
<dbReference type="GO" id="GO:0032933">
    <property type="term" value="P:SREBP signaling pathway"/>
    <property type="evidence" value="ECO:0000318"/>
    <property type="project" value="GO_Central"/>
</dbReference>
<dbReference type="GO" id="GO:0036316">
    <property type="term" value="P:SREBP-SCAP complex retention in endoplasmic reticulum"/>
    <property type="evidence" value="ECO:0000318"/>
    <property type="project" value="GO_Central"/>
</dbReference>
<dbReference type="InterPro" id="IPR025929">
    <property type="entry name" value="INSIG_fam"/>
</dbReference>
<dbReference type="PANTHER" id="PTHR15301">
    <property type="entry name" value="INSULIN-INDUCED GENE 1"/>
    <property type="match status" value="1"/>
</dbReference>
<dbReference type="PANTHER" id="PTHR15301:SF11">
    <property type="entry name" value="INSULIN-INDUCED GENE 1 PROTEIN"/>
    <property type="match status" value="1"/>
</dbReference>
<dbReference type="Pfam" id="PF07281">
    <property type="entry name" value="INSIG"/>
    <property type="match status" value="1"/>
</dbReference>
<protein>
    <recommendedName>
        <fullName evidence="2">Insulin-induced gene 1 protein</fullName>
        <shortName evidence="2">INSIG-1</shortName>
    </recommendedName>
</protein>
<comment type="function">
    <text evidence="2">Oxysterol-binding protein that mediates feedback control of cholesterol synthesis by controlling both endoplasmic reticulum to Golgi transport of SCAP and degradation of HMGCR. Acts as a negative regulator of cholesterol biosynthesis by mediating the retention of the SCAP-SREBP complex in the endoplasmic reticulum, thereby blocking the processing of sterol regulatory element-binding proteins (SREBPs) SREBF1/SREBP1 and SREBF2/SREBP2. Binds oxysterol, including 25-hydroxycholesterol, regulating interaction with SCAP and retention of the SCAP-SREBP complex in the endoplasmic reticulum. In presence of oxysterol, interacts with SCAP, retaining the SCAP-SREBP complex in the endoplasmic reticulum, thereby preventing SCAP from escorting SREBF1/SREBP1 and SREBF2/SREBP2 to the Golgi. Sterol deprivation or phosphorylation by PCK1 reduce oxysterol-binding, disrupting the interaction between INSIG1 and SCAP, thereby promoting Golgi transport of the SCAP-SREBP complex, followed by processing and nuclear translocation of SREBF1/SREBP1 and SREBF2/SREBP2. Also regulates cholesterol synthesis by regulating degradation of HMGCR: initiates the sterol-mediated ubiquitin-mediated endoplasmic reticulum-associated degradation (ERAD) of HMGCR via recruitment of the reductase to the ubiquitin ligases AMFR/gp78 and/or RNF139. Also regulates degradation of SOAT2/ACAT2 when the lipid levels are low: initiates the ubiquitin-mediated degradation of SOAT2/ACAT2 via recruitment of the ubiquitin ligases AMFR/gp78.</text>
</comment>
<comment type="subunit">
    <text evidence="2 3">Interacts with SCAP; interaction is direct and only takes place in the presence of sterols; it prevents interaction between SCAP and the coat protein complex II (COPII) (By similarity). Associates with the SCAP-SREBP complex (composed of SCAP and SREBF1/SREBP1 or SREBF2/SREBP2); association is mediated via its interaction with SCAP and only takes place in the presence of sterols. Interaction with SCAP is mutually exclusive with PAQR3. Interacts with HMGCR (via its SSD); the interaction, accelerated by sterols, leads to the recruitment of HMGCR to AMFR/gp78 for its ubiquitination by the sterol-mediated ERAD pathway. Interacts with AMFR/gp78 (via its membrane domain); the interaction recruits HMCR at the ER membrane for its ubiquitination and degradation by the sterol-mediated ERAD pathway. Interacts with SOAT2/ACAT2; leading to promote recruitment of AMFR/gp78 and subsequent ubiquitination of SOAT2/ACAT2. Interacts with RNF139. Interacts with RNF145 (By similarity).</text>
</comment>
<comment type="subcellular location">
    <subcellularLocation>
        <location evidence="2">Endoplasmic reticulum membrane</location>
        <topology evidence="2">Multi-pass membrane protein</topology>
    </subcellularLocation>
</comment>
<comment type="domain">
    <text evidence="2">The KxHxx motif mediates association with the coatomer complex.</text>
</comment>
<comment type="domain">
    <text evidence="4">Binds oxysterols in a pocket within their transmembrane domains and interacts with SCAP via transmembrane domains 3 and 4.</text>
</comment>
<comment type="PTM">
    <text evidence="2">Phosphorylation at Ser-206 by PCK1 reduces binding to oxysterol, disrupting the interaction between INSIG1 and SCAP, thereby promoting nuclear translocation of SREBP proteins (SREBF1/SREBP1 or SREBF2/SREBP2) and subsequent transcription of downstream lipogenesis-related genes.</text>
</comment>
<comment type="PTM">
    <text evidence="2">Ubiquitinated by AMFR/gp78 in response to sterol deprivation, leading to its degradation: when the SCAP-SREBP complex becomes dissociated from INSIG1, INSIG1 is then ubiquitinated and degraded in proteasomes. Although ubiquitination is required for rapid INSIG1 degradation, it is not required for release of the SCAP-SREBP complex. Ubiquitinated by RNF139.</text>
</comment>
<comment type="similarity">
    <text evidence="6">Belongs to the INSIG family.</text>
</comment>
<proteinExistence type="evidence at transcript level"/>
<accession>A0JNC3</accession>
<reference key="1">
    <citation type="submission" date="2006-10" db="EMBL/GenBank/DDBJ databases">
        <authorList>
            <consortium name="NIH - Mammalian Gene Collection (MGC) project"/>
        </authorList>
    </citation>
    <scope>NUCLEOTIDE SEQUENCE [LARGE SCALE MRNA]</scope>
    <source>
        <strain>Hereford</strain>
        <tissue>Ascending colon</tissue>
    </source>
</reference>
<sequence length="276" mass="29608">MPRLDDHLWRGPCAKGTKHRSHPRASARGLVAKAGEMINSSGSGPSLLAAHGALGTDPAHGPQSAGVGGQGSSSHVNSWHHHLVQRSLVLFSVGVVLALVLNLLQVQRNVTLFPDEVIATIFSSAWWVPPCCGTAAAVVGLLYPCIDSHLGEPHKFKREWASVMRCVAVFVGINHASAKLDFANNVQLSLTLAALSLGLWWTFDRSRSGLGLGITIAFLATLITQLLVYNGVYQYTSPDFLYIRSWLPCIFFSGGVTVGNIGRQLAMGVPEKPHSD</sequence>
<feature type="chain" id="PRO_0000286805" description="Insulin-induced gene 1 protein">
    <location>
        <begin position="1"/>
        <end position="276"/>
    </location>
</feature>
<feature type="topological domain" description="Cytoplasmic" evidence="2">
    <location>
        <begin position="1"/>
        <end position="83"/>
    </location>
</feature>
<feature type="transmembrane region" description="Helical; Name=1" evidence="1">
    <location>
        <begin position="84"/>
        <end position="106"/>
    </location>
</feature>
<feature type="topological domain" description="Extracellular" evidence="6">
    <location>
        <begin position="107"/>
        <end position="125"/>
    </location>
</feature>
<feature type="transmembrane region" description="Helical; Name=2" evidence="1">
    <location>
        <begin position="126"/>
        <end position="143"/>
    </location>
</feature>
<feature type="topological domain" description="Cytoplasmic" evidence="6">
    <location>
        <begin position="144"/>
        <end position="158"/>
    </location>
</feature>
<feature type="transmembrane region" description="Helical; Name=3" evidence="1">
    <location>
        <begin position="159"/>
        <end position="181"/>
    </location>
</feature>
<feature type="topological domain" description="Extracellular" evidence="6">
    <location>
        <begin position="182"/>
        <end position="184"/>
    </location>
</feature>
<feature type="transmembrane region" description="Helical; Name=4" evidence="1">
    <location>
        <begin position="185"/>
        <end position="203"/>
    </location>
</feature>
<feature type="topological domain" description="Cytoplasmic" evidence="2">
    <location>
        <begin position="204"/>
        <end position="208"/>
    </location>
</feature>
<feature type="transmembrane region" description="Helical; Name=5" evidence="1">
    <location>
        <begin position="209"/>
        <end position="230"/>
    </location>
</feature>
<feature type="topological domain" description="Extracellular" evidence="6">
    <location>
        <begin position="231"/>
        <end position="244"/>
    </location>
</feature>
<feature type="transmembrane region" description="Helical; Name=6" evidence="1">
    <location>
        <begin position="245"/>
        <end position="262"/>
    </location>
</feature>
<feature type="topological domain" description="Cytoplasmic" evidence="2">
    <location>
        <begin position="263"/>
        <end position="276"/>
    </location>
</feature>
<feature type="region of interest" description="Disordered" evidence="5">
    <location>
        <begin position="1"/>
        <end position="26"/>
    </location>
</feature>
<feature type="region of interest" description="Disordered" evidence="5">
    <location>
        <begin position="49"/>
        <end position="73"/>
    </location>
</feature>
<feature type="short sequence motif" description="KxHxx" evidence="2">
    <location>
        <begin position="270"/>
        <end position="276"/>
    </location>
</feature>
<feature type="compositionally biased region" description="Basic residues" evidence="5">
    <location>
        <begin position="16"/>
        <end position="25"/>
    </location>
</feature>
<feature type="site" description="Required for the recognition of 25-hydroxycholesterol" evidence="4">
    <location>
        <position position="170"/>
    </location>
</feature>
<feature type="modified residue" description="Phosphoserine" evidence="2">
    <location>
        <position position="206"/>
    </location>
</feature>
<feature type="cross-link" description="Glycyl lysine isopeptide (Lys-Gly) (interchain with G-Cter in ubiquitin)" evidence="2">
    <location>
        <position position="155"/>
    </location>
</feature>
<feature type="cross-link" description="Glycyl lysine isopeptide (Lys-Gly) (interchain with G-Cter in ubiquitin)" evidence="2">
    <location>
        <position position="157"/>
    </location>
</feature>
<keyword id="KW-0153">Cholesterol metabolism</keyword>
<keyword id="KW-0256">Endoplasmic reticulum</keyword>
<keyword id="KW-1017">Isopeptide bond</keyword>
<keyword id="KW-0443">Lipid metabolism</keyword>
<keyword id="KW-0446">Lipid-binding</keyword>
<keyword id="KW-0472">Membrane</keyword>
<keyword id="KW-0597">Phosphoprotein</keyword>
<keyword id="KW-1185">Reference proteome</keyword>
<keyword id="KW-0753">Steroid metabolism</keyword>
<keyword id="KW-1207">Sterol metabolism</keyword>
<keyword id="KW-0812">Transmembrane</keyword>
<keyword id="KW-1133">Transmembrane helix</keyword>
<keyword id="KW-0832">Ubl conjugation</keyword>
<organism>
    <name type="scientific">Bos taurus</name>
    <name type="common">Bovine</name>
    <dbReference type="NCBI Taxonomy" id="9913"/>
    <lineage>
        <taxon>Eukaryota</taxon>
        <taxon>Metazoa</taxon>
        <taxon>Chordata</taxon>
        <taxon>Craniata</taxon>
        <taxon>Vertebrata</taxon>
        <taxon>Euteleostomi</taxon>
        <taxon>Mammalia</taxon>
        <taxon>Eutheria</taxon>
        <taxon>Laurasiatheria</taxon>
        <taxon>Artiodactyla</taxon>
        <taxon>Ruminantia</taxon>
        <taxon>Pecora</taxon>
        <taxon>Bovidae</taxon>
        <taxon>Bovinae</taxon>
        <taxon>Bos</taxon>
    </lineage>
</organism>
<evidence type="ECO:0000250" key="1">
    <source>
        <dbReference type="UniProtKB" id="A1T557"/>
    </source>
</evidence>
<evidence type="ECO:0000250" key="2">
    <source>
        <dbReference type="UniProtKB" id="O15503"/>
    </source>
</evidence>
<evidence type="ECO:0000250" key="3">
    <source>
        <dbReference type="UniProtKB" id="Q8BGI3"/>
    </source>
</evidence>
<evidence type="ECO:0000250" key="4">
    <source>
        <dbReference type="UniProtKB" id="Q9Y5U4"/>
    </source>
</evidence>
<evidence type="ECO:0000256" key="5">
    <source>
        <dbReference type="SAM" id="MobiDB-lite"/>
    </source>
</evidence>
<evidence type="ECO:0000305" key="6"/>
<name>INSI1_BOVIN</name>